<protein>
    <recommendedName>
        <fullName evidence="1">Phosphoheptose isomerase</fullName>
        <ecNumber evidence="1">5.3.1.28</ecNumber>
    </recommendedName>
    <alternativeName>
        <fullName evidence="1">Sedoheptulose 7-phosphate isomerase</fullName>
    </alternativeName>
</protein>
<reference key="1">
    <citation type="journal article" date="2011" name="Stand. Genomic Sci.">
        <title>Complete genome sequence of the halophilic and highly halotolerant Chromohalobacter salexigens type strain (1H11(T)).</title>
        <authorList>
            <person name="Copeland A."/>
            <person name="O'Connor K."/>
            <person name="Lucas S."/>
            <person name="Lapidus A."/>
            <person name="Berry K.W."/>
            <person name="Detter J.C."/>
            <person name="Del Rio T.G."/>
            <person name="Hammon N."/>
            <person name="Dalin E."/>
            <person name="Tice H."/>
            <person name="Pitluck S."/>
            <person name="Bruce D."/>
            <person name="Goodwin L."/>
            <person name="Han C."/>
            <person name="Tapia R."/>
            <person name="Saunders E."/>
            <person name="Schmutz J."/>
            <person name="Brettin T."/>
            <person name="Larimer F."/>
            <person name="Land M."/>
            <person name="Hauser L."/>
            <person name="Vargas C."/>
            <person name="Nieto J.J."/>
            <person name="Kyrpides N.C."/>
            <person name="Ivanova N."/>
            <person name="Goker M."/>
            <person name="Klenk H.P."/>
            <person name="Csonka L.N."/>
            <person name="Woyke T."/>
        </authorList>
    </citation>
    <scope>NUCLEOTIDE SEQUENCE [LARGE SCALE GENOMIC DNA]</scope>
    <source>
        <strain>ATCC BAA-138 / DSM 3043 / CIP 106854 / NCIMB 13768 / 1H11</strain>
    </source>
</reference>
<dbReference type="EC" id="5.3.1.28" evidence="1"/>
<dbReference type="EMBL" id="CP000285">
    <property type="protein sequence ID" value="ABE59553.1"/>
    <property type="molecule type" value="Genomic_DNA"/>
</dbReference>
<dbReference type="RefSeq" id="WP_011507499.1">
    <property type="nucleotide sequence ID" value="NC_007963.1"/>
</dbReference>
<dbReference type="SMR" id="Q1QVF5"/>
<dbReference type="STRING" id="290398.Csal_2202"/>
<dbReference type="GeneID" id="95334920"/>
<dbReference type="KEGG" id="csa:Csal_2202"/>
<dbReference type="eggNOG" id="COG0279">
    <property type="taxonomic scope" value="Bacteria"/>
</dbReference>
<dbReference type="HOGENOM" id="CLU_080999_3_1_6"/>
<dbReference type="OrthoDB" id="9810929at2"/>
<dbReference type="UniPathway" id="UPA00041">
    <property type="reaction ID" value="UER00436"/>
</dbReference>
<dbReference type="Proteomes" id="UP000000239">
    <property type="component" value="Chromosome"/>
</dbReference>
<dbReference type="GO" id="GO:0005737">
    <property type="term" value="C:cytoplasm"/>
    <property type="evidence" value="ECO:0007669"/>
    <property type="project" value="UniProtKB-SubCell"/>
</dbReference>
<dbReference type="GO" id="GO:0097367">
    <property type="term" value="F:carbohydrate derivative binding"/>
    <property type="evidence" value="ECO:0007669"/>
    <property type="project" value="InterPro"/>
</dbReference>
<dbReference type="GO" id="GO:0008968">
    <property type="term" value="F:D-sedoheptulose 7-phosphate isomerase activity"/>
    <property type="evidence" value="ECO:0007669"/>
    <property type="project" value="UniProtKB-UniRule"/>
</dbReference>
<dbReference type="GO" id="GO:0008270">
    <property type="term" value="F:zinc ion binding"/>
    <property type="evidence" value="ECO:0007669"/>
    <property type="project" value="UniProtKB-UniRule"/>
</dbReference>
<dbReference type="GO" id="GO:0005975">
    <property type="term" value="P:carbohydrate metabolic process"/>
    <property type="evidence" value="ECO:0007669"/>
    <property type="project" value="UniProtKB-UniRule"/>
</dbReference>
<dbReference type="GO" id="GO:2001061">
    <property type="term" value="P:D-glycero-D-manno-heptose 7-phosphate biosynthetic process"/>
    <property type="evidence" value="ECO:0007669"/>
    <property type="project" value="UniProtKB-UniPathway"/>
</dbReference>
<dbReference type="CDD" id="cd05006">
    <property type="entry name" value="SIS_GmhA"/>
    <property type="match status" value="1"/>
</dbReference>
<dbReference type="Gene3D" id="3.40.50.10490">
    <property type="entry name" value="Glucose-6-phosphate isomerase like protein, domain 1"/>
    <property type="match status" value="1"/>
</dbReference>
<dbReference type="HAMAP" id="MF_00067">
    <property type="entry name" value="GmhA"/>
    <property type="match status" value="1"/>
</dbReference>
<dbReference type="InterPro" id="IPR035461">
    <property type="entry name" value="GmhA/DiaA"/>
</dbReference>
<dbReference type="InterPro" id="IPR004515">
    <property type="entry name" value="Phosphoheptose_Isoase"/>
</dbReference>
<dbReference type="InterPro" id="IPR001347">
    <property type="entry name" value="SIS_dom"/>
</dbReference>
<dbReference type="InterPro" id="IPR046348">
    <property type="entry name" value="SIS_dom_sf"/>
</dbReference>
<dbReference type="InterPro" id="IPR050099">
    <property type="entry name" value="SIS_GmhA/DiaA_subfam"/>
</dbReference>
<dbReference type="NCBIfam" id="NF010546">
    <property type="entry name" value="PRK13936.1"/>
    <property type="match status" value="1"/>
</dbReference>
<dbReference type="PANTHER" id="PTHR30390:SF6">
    <property type="entry name" value="DNAA INITIATOR-ASSOCIATING PROTEIN DIAA"/>
    <property type="match status" value="1"/>
</dbReference>
<dbReference type="PANTHER" id="PTHR30390">
    <property type="entry name" value="SEDOHEPTULOSE 7-PHOSPHATE ISOMERASE / DNAA INITIATOR-ASSOCIATING FACTOR FOR REPLICATION INITIATION"/>
    <property type="match status" value="1"/>
</dbReference>
<dbReference type="Pfam" id="PF13580">
    <property type="entry name" value="SIS_2"/>
    <property type="match status" value="1"/>
</dbReference>
<dbReference type="SUPFAM" id="SSF53697">
    <property type="entry name" value="SIS domain"/>
    <property type="match status" value="1"/>
</dbReference>
<dbReference type="PROSITE" id="PS51464">
    <property type="entry name" value="SIS"/>
    <property type="match status" value="1"/>
</dbReference>
<proteinExistence type="inferred from homology"/>
<organism>
    <name type="scientific">Chromohalobacter salexigens (strain ATCC BAA-138 / DSM 3043 / CIP 106854 / NCIMB 13768 / 1H11)</name>
    <dbReference type="NCBI Taxonomy" id="290398"/>
    <lineage>
        <taxon>Bacteria</taxon>
        <taxon>Pseudomonadati</taxon>
        <taxon>Pseudomonadota</taxon>
        <taxon>Gammaproteobacteria</taxon>
        <taxon>Oceanospirillales</taxon>
        <taxon>Halomonadaceae</taxon>
        <taxon>Chromohalobacter</taxon>
    </lineage>
</organism>
<gene>
    <name evidence="1" type="primary">gmhA</name>
    <name type="ordered locus">Csal_2202</name>
</gene>
<sequence length="197" mass="21200">MDFQSRILGHFNASIDAKTYASEVLPPFIEVASQMMVQCLVSEGKILACGNGGSAGDSQHFSSELLNRFERERPSLPALALTTDTSTLTSIANDYSYNEIFSKQIRALGQPGDILLAISTSGNSANVVQAIQAAHDRDMHIVALTGRDGGDMASLLGQDDCEIRVPSTSTARIQEVHLLAIHCLCDLIDQQLFGSTE</sequence>
<feature type="chain" id="PRO_1000009058" description="Phosphoheptose isomerase">
    <location>
        <begin position="1"/>
        <end position="197"/>
    </location>
</feature>
<feature type="domain" description="SIS" evidence="1">
    <location>
        <begin position="36"/>
        <end position="197"/>
    </location>
</feature>
<feature type="binding site" evidence="1">
    <location>
        <begin position="51"/>
        <end position="53"/>
    </location>
    <ligand>
        <name>substrate</name>
    </ligand>
</feature>
<feature type="binding site" evidence="1">
    <location>
        <position position="60"/>
    </location>
    <ligand>
        <name>Zn(2+)</name>
        <dbReference type="ChEBI" id="CHEBI:29105"/>
    </ligand>
</feature>
<feature type="binding site" evidence="1">
    <location>
        <position position="64"/>
    </location>
    <ligand>
        <name>substrate</name>
    </ligand>
</feature>
<feature type="binding site" evidence="1">
    <location>
        <position position="64"/>
    </location>
    <ligand>
        <name>Zn(2+)</name>
        <dbReference type="ChEBI" id="CHEBI:29105"/>
    </ligand>
</feature>
<feature type="binding site" evidence="1">
    <location>
        <begin position="93"/>
        <end position="94"/>
    </location>
    <ligand>
        <name>substrate</name>
    </ligand>
</feature>
<feature type="binding site" evidence="1">
    <location>
        <begin position="119"/>
        <end position="121"/>
    </location>
    <ligand>
        <name>substrate</name>
    </ligand>
</feature>
<feature type="binding site" evidence="1">
    <location>
        <position position="124"/>
    </location>
    <ligand>
        <name>substrate</name>
    </ligand>
</feature>
<feature type="binding site" evidence="1">
    <location>
        <position position="174"/>
    </location>
    <ligand>
        <name>substrate</name>
    </ligand>
</feature>
<feature type="binding site" evidence="1">
    <location>
        <position position="174"/>
    </location>
    <ligand>
        <name>Zn(2+)</name>
        <dbReference type="ChEBI" id="CHEBI:29105"/>
    </ligand>
</feature>
<feature type="binding site" evidence="1">
    <location>
        <position position="182"/>
    </location>
    <ligand>
        <name>Zn(2+)</name>
        <dbReference type="ChEBI" id="CHEBI:29105"/>
    </ligand>
</feature>
<accession>Q1QVF5</accession>
<evidence type="ECO:0000255" key="1">
    <source>
        <dbReference type="HAMAP-Rule" id="MF_00067"/>
    </source>
</evidence>
<name>GMHA_CHRSD</name>
<keyword id="KW-0119">Carbohydrate metabolism</keyword>
<keyword id="KW-0963">Cytoplasm</keyword>
<keyword id="KW-0413">Isomerase</keyword>
<keyword id="KW-0479">Metal-binding</keyword>
<keyword id="KW-1185">Reference proteome</keyword>
<keyword id="KW-0862">Zinc</keyword>
<comment type="function">
    <text evidence="1">Catalyzes the isomerization of sedoheptulose 7-phosphate in D-glycero-D-manno-heptose 7-phosphate.</text>
</comment>
<comment type="catalytic activity">
    <reaction evidence="1">
        <text>2 D-sedoheptulose 7-phosphate = D-glycero-alpha-D-manno-heptose 7-phosphate + D-glycero-beta-D-manno-heptose 7-phosphate</text>
        <dbReference type="Rhea" id="RHEA:27489"/>
        <dbReference type="ChEBI" id="CHEBI:57483"/>
        <dbReference type="ChEBI" id="CHEBI:60203"/>
        <dbReference type="ChEBI" id="CHEBI:60204"/>
        <dbReference type="EC" id="5.3.1.28"/>
    </reaction>
</comment>
<comment type="cofactor">
    <cofactor evidence="1">
        <name>Zn(2+)</name>
        <dbReference type="ChEBI" id="CHEBI:29105"/>
    </cofactor>
    <text evidence="1">Binds 1 zinc ion per subunit.</text>
</comment>
<comment type="pathway">
    <text evidence="1">Carbohydrate biosynthesis; D-glycero-D-manno-heptose 7-phosphate biosynthesis; D-glycero-alpha-D-manno-heptose 7-phosphate and D-glycero-beta-D-manno-heptose 7-phosphate from sedoheptulose 7-phosphate: step 1/1.</text>
</comment>
<comment type="subunit">
    <text evidence="1">Homotetramer.</text>
</comment>
<comment type="subcellular location">
    <subcellularLocation>
        <location evidence="1">Cytoplasm</location>
    </subcellularLocation>
</comment>
<comment type="miscellaneous">
    <text evidence="1">The reaction produces a racemic mixture of D-glycero-alpha-D-manno-heptose 7-phosphate and D-glycero-beta-D-manno-heptose 7-phosphate.</text>
</comment>
<comment type="similarity">
    <text evidence="1">Belongs to the SIS family. GmhA subfamily.</text>
</comment>